<organism>
    <name type="scientific">Cereibacter sphaeroides (strain ATCC 17023 / DSM 158 / JCM 6121 / CCUG 31486 / LMG 2827 / NBRC 12203 / NCIMB 8253 / ATH 2.4.1.)</name>
    <name type="common">Rhodobacter sphaeroides</name>
    <dbReference type="NCBI Taxonomy" id="272943"/>
    <lineage>
        <taxon>Bacteria</taxon>
        <taxon>Pseudomonadati</taxon>
        <taxon>Pseudomonadota</taxon>
        <taxon>Alphaproteobacteria</taxon>
        <taxon>Rhodobacterales</taxon>
        <taxon>Paracoccaceae</taxon>
        <taxon>Cereibacter</taxon>
    </lineage>
</organism>
<comment type="function">
    <text evidence="1">Catalyzes the reversible phosphorylation of S-methyl-5'-thioadenosine (MTA) to adenine and 5-methylthioribose-1-phosphate. Involved in the breakdown of MTA, a major by-product of polyamine biosynthesis. Responsible for the first step in the methionine salvage pathway after MTA has been generated from S-adenosylmethionine. Has broad substrate specificity with 6-aminopurine nucleosides as preferred substrates.</text>
</comment>
<comment type="catalytic activity">
    <reaction evidence="1">
        <text>S-methyl-5'-thioadenosine + phosphate = 5-(methylsulfanyl)-alpha-D-ribose 1-phosphate + adenine</text>
        <dbReference type="Rhea" id="RHEA:11852"/>
        <dbReference type="ChEBI" id="CHEBI:16708"/>
        <dbReference type="ChEBI" id="CHEBI:17509"/>
        <dbReference type="ChEBI" id="CHEBI:43474"/>
        <dbReference type="ChEBI" id="CHEBI:58533"/>
        <dbReference type="EC" id="2.4.2.28"/>
    </reaction>
</comment>
<comment type="pathway">
    <text evidence="1">Amino-acid biosynthesis; L-methionine biosynthesis via salvage pathway; S-methyl-5-thio-alpha-D-ribose 1-phosphate from S-methyl-5'-thioadenosine (phosphorylase route): step 1/1.</text>
</comment>
<comment type="subunit">
    <text evidence="1">Homohexamer. Dimer of a homotrimer.</text>
</comment>
<comment type="similarity">
    <text evidence="1">Belongs to the PNP/MTAP phosphorylase family. MTAP subfamily.</text>
</comment>
<accession>Q3J5E8</accession>
<reference key="1">
    <citation type="submission" date="2005-09" db="EMBL/GenBank/DDBJ databases">
        <title>Complete sequence of chromosome 1 of Rhodobacter sphaeroides 2.4.1.</title>
        <authorList>
            <person name="Copeland A."/>
            <person name="Lucas S."/>
            <person name="Lapidus A."/>
            <person name="Barry K."/>
            <person name="Detter J.C."/>
            <person name="Glavina T."/>
            <person name="Hammon N."/>
            <person name="Israni S."/>
            <person name="Pitluck S."/>
            <person name="Richardson P."/>
            <person name="Mackenzie C."/>
            <person name="Choudhary M."/>
            <person name="Larimer F."/>
            <person name="Hauser L.J."/>
            <person name="Land M."/>
            <person name="Donohue T.J."/>
            <person name="Kaplan S."/>
        </authorList>
    </citation>
    <scope>NUCLEOTIDE SEQUENCE [LARGE SCALE GENOMIC DNA]</scope>
    <source>
        <strain>ATCC 17023 / DSM 158 / JCM 6121 / CCUG 31486 / LMG 2827 / NBRC 12203 / NCIMB 8253 / ATH 2.4.1.</strain>
    </source>
</reference>
<feature type="chain" id="PRO_0000415098" description="S-methyl-5'-thioadenosine phosphorylase">
    <location>
        <begin position="1"/>
        <end position="290"/>
    </location>
</feature>
<feature type="binding site" evidence="1">
    <location>
        <position position="11"/>
    </location>
    <ligand>
        <name>phosphate</name>
        <dbReference type="ChEBI" id="CHEBI:43474"/>
    </ligand>
</feature>
<feature type="binding site" evidence="1">
    <location>
        <begin position="53"/>
        <end position="54"/>
    </location>
    <ligand>
        <name>phosphate</name>
        <dbReference type="ChEBI" id="CHEBI:43474"/>
    </ligand>
</feature>
<feature type="binding site" evidence="1">
    <location>
        <begin position="86"/>
        <end position="87"/>
    </location>
    <ligand>
        <name>phosphate</name>
        <dbReference type="ChEBI" id="CHEBI:43474"/>
    </ligand>
</feature>
<feature type="binding site" evidence="1">
    <location>
        <position position="184"/>
    </location>
    <ligand>
        <name>substrate</name>
    </ligand>
</feature>
<feature type="binding site" evidence="1">
    <location>
        <position position="185"/>
    </location>
    <ligand>
        <name>phosphate</name>
        <dbReference type="ChEBI" id="CHEBI:43474"/>
    </ligand>
</feature>
<feature type="binding site" evidence="1">
    <location>
        <begin position="208"/>
        <end position="210"/>
    </location>
    <ligand>
        <name>substrate</name>
    </ligand>
</feature>
<feature type="site" description="Important for substrate specificity" evidence="1">
    <location>
        <position position="166"/>
    </location>
</feature>
<feature type="site" description="Important for substrate specificity" evidence="1">
    <location>
        <position position="221"/>
    </location>
</feature>
<evidence type="ECO:0000255" key="1">
    <source>
        <dbReference type="HAMAP-Rule" id="MF_01963"/>
    </source>
</evidence>
<name>MTAP_CERS4</name>
<keyword id="KW-0328">Glycosyltransferase</keyword>
<keyword id="KW-0660">Purine salvage</keyword>
<keyword id="KW-1185">Reference proteome</keyword>
<keyword id="KW-0808">Transferase</keyword>
<dbReference type="EC" id="2.4.2.28" evidence="1"/>
<dbReference type="EMBL" id="CP000143">
    <property type="protein sequence ID" value="ABA77986.1"/>
    <property type="molecule type" value="Genomic_DNA"/>
</dbReference>
<dbReference type="RefSeq" id="WP_011337020.1">
    <property type="nucleotide sequence ID" value="NC_007493.2"/>
</dbReference>
<dbReference type="RefSeq" id="YP_351887.1">
    <property type="nucleotide sequence ID" value="NC_007493.2"/>
</dbReference>
<dbReference type="SMR" id="Q3J5E8"/>
<dbReference type="STRING" id="272943.RSP_1837"/>
<dbReference type="EnsemblBacteria" id="ABA77986">
    <property type="protein sequence ID" value="ABA77986"/>
    <property type="gene ID" value="RSP_1837"/>
</dbReference>
<dbReference type="GeneID" id="3719104"/>
<dbReference type="KEGG" id="rsp:RSP_1837"/>
<dbReference type="PATRIC" id="fig|272943.9.peg.724"/>
<dbReference type="eggNOG" id="COG0005">
    <property type="taxonomic scope" value="Bacteria"/>
</dbReference>
<dbReference type="OrthoDB" id="1523230at2"/>
<dbReference type="PhylomeDB" id="Q3J5E8"/>
<dbReference type="UniPathway" id="UPA00904">
    <property type="reaction ID" value="UER00873"/>
</dbReference>
<dbReference type="Proteomes" id="UP000002703">
    <property type="component" value="Chromosome 1"/>
</dbReference>
<dbReference type="GO" id="GO:0005829">
    <property type="term" value="C:cytosol"/>
    <property type="evidence" value="ECO:0007669"/>
    <property type="project" value="TreeGrafter"/>
</dbReference>
<dbReference type="GO" id="GO:0017061">
    <property type="term" value="F:S-methyl-5-thioadenosine phosphorylase activity"/>
    <property type="evidence" value="ECO:0007669"/>
    <property type="project" value="UniProtKB-UniRule"/>
</dbReference>
<dbReference type="GO" id="GO:0019509">
    <property type="term" value="P:L-methionine salvage from methylthioadenosine"/>
    <property type="evidence" value="ECO:0007669"/>
    <property type="project" value="UniProtKB-UniRule"/>
</dbReference>
<dbReference type="GO" id="GO:0006166">
    <property type="term" value="P:purine ribonucleoside salvage"/>
    <property type="evidence" value="ECO:0007669"/>
    <property type="project" value="UniProtKB-KW"/>
</dbReference>
<dbReference type="CDD" id="cd09010">
    <property type="entry name" value="MTAP_SsMTAPII_like_MTIP"/>
    <property type="match status" value="1"/>
</dbReference>
<dbReference type="FunFam" id="3.40.50.1580:FF:000012">
    <property type="entry name" value="Probable 6-oxopurine nucleoside phosphorylase"/>
    <property type="match status" value="1"/>
</dbReference>
<dbReference type="Gene3D" id="3.40.50.1580">
    <property type="entry name" value="Nucleoside phosphorylase domain"/>
    <property type="match status" value="1"/>
</dbReference>
<dbReference type="HAMAP" id="MF_01963">
    <property type="entry name" value="MTAP"/>
    <property type="match status" value="1"/>
</dbReference>
<dbReference type="InterPro" id="IPR010044">
    <property type="entry name" value="MTAP"/>
</dbReference>
<dbReference type="InterPro" id="IPR000845">
    <property type="entry name" value="Nucleoside_phosphorylase_d"/>
</dbReference>
<dbReference type="InterPro" id="IPR035994">
    <property type="entry name" value="Nucleoside_phosphorylase_sf"/>
</dbReference>
<dbReference type="NCBIfam" id="TIGR01694">
    <property type="entry name" value="MTAP"/>
    <property type="match status" value="1"/>
</dbReference>
<dbReference type="NCBIfam" id="NF006492">
    <property type="entry name" value="PRK08931.1"/>
    <property type="match status" value="1"/>
</dbReference>
<dbReference type="PANTHER" id="PTHR42679">
    <property type="entry name" value="S-METHYL-5'-THIOADENOSINE PHOSPHORYLASE"/>
    <property type="match status" value="1"/>
</dbReference>
<dbReference type="PANTHER" id="PTHR42679:SF2">
    <property type="entry name" value="S-METHYL-5'-THIOADENOSINE PHOSPHORYLASE"/>
    <property type="match status" value="1"/>
</dbReference>
<dbReference type="Pfam" id="PF01048">
    <property type="entry name" value="PNP_UDP_1"/>
    <property type="match status" value="1"/>
</dbReference>
<dbReference type="SUPFAM" id="SSF53167">
    <property type="entry name" value="Purine and uridine phosphorylases"/>
    <property type="match status" value="1"/>
</dbReference>
<protein>
    <recommendedName>
        <fullName evidence="1">S-methyl-5'-thioadenosine phosphorylase</fullName>
        <ecNumber evidence="1">2.4.2.28</ecNumber>
    </recommendedName>
    <alternativeName>
        <fullName evidence="1">5'-methylthioadenosine phosphorylase</fullName>
        <shortName evidence="1">MTA phosphorylase</shortName>
        <shortName evidence="1">MTAP</shortName>
    </alternativeName>
</protein>
<proteinExistence type="inferred from homology"/>
<sequence>MKTMIGVIGGSGVYEIDGLEDAVWTKVETPWGDPSDEILTGRLDGVPMAFLPRHGRGHVHSPTTVPYRANIDALKRLGVTDLVSVSACGSFREEMAPGDFVIVDQFIDRSFARAKSFFGSGCVAHVSLAHPTCGRLSALCAEAARATGVTVHEGGTYLCMEGPQFSTLAESLLYKSWGCHVIGMTNMPEAKLAREAEICYASVAMVTDYDSWHPHHGEVDITAIIATLGTNADHARGLVAGLPARLGTERDLCPHGCDRALDHALMTAPAKRDPELLAKLDAVAGRVLKG</sequence>
<gene>
    <name evidence="1" type="primary">mtnP</name>
    <name type="ordered locus">RHOS4_04180</name>
    <name type="ORF">RSP_1837</name>
</gene>